<organism>
    <name type="scientific">Methanosarcina acetivorans (strain ATCC 35395 / DSM 2834 / JCM 12185 / C2A)</name>
    <dbReference type="NCBI Taxonomy" id="188937"/>
    <lineage>
        <taxon>Archaea</taxon>
        <taxon>Methanobacteriati</taxon>
        <taxon>Methanobacteriota</taxon>
        <taxon>Stenosarchaea group</taxon>
        <taxon>Methanomicrobia</taxon>
        <taxon>Methanosarcinales</taxon>
        <taxon>Methanosarcinaceae</taxon>
        <taxon>Methanosarcina</taxon>
    </lineage>
</organism>
<protein>
    <recommendedName>
        <fullName evidence="1">UPF0285 protein MA_3856</fullName>
    </recommendedName>
</protein>
<dbReference type="EMBL" id="AE010299">
    <property type="protein sequence ID" value="AAM07207.1"/>
    <property type="molecule type" value="Genomic_DNA"/>
</dbReference>
<dbReference type="RefSeq" id="WP_011023754.1">
    <property type="nucleotide sequence ID" value="NC_003552.1"/>
</dbReference>
<dbReference type="SMR" id="Q8TJD0"/>
<dbReference type="FunCoup" id="Q8TJD0">
    <property type="interactions" value="1"/>
</dbReference>
<dbReference type="STRING" id="188937.MA_3856"/>
<dbReference type="EnsemblBacteria" id="AAM07207">
    <property type="protein sequence ID" value="AAM07207"/>
    <property type="gene ID" value="MA_3856"/>
</dbReference>
<dbReference type="GeneID" id="1475749"/>
<dbReference type="KEGG" id="mac:MA_3856"/>
<dbReference type="HOGENOM" id="CLU_846254_0_0_2"/>
<dbReference type="InParanoid" id="Q8TJD0"/>
<dbReference type="OrthoDB" id="235676at2157"/>
<dbReference type="PhylomeDB" id="Q8TJD0"/>
<dbReference type="Proteomes" id="UP000002487">
    <property type="component" value="Chromosome"/>
</dbReference>
<dbReference type="HAMAP" id="MF_01087">
    <property type="entry name" value="UPF0285"/>
    <property type="match status" value="1"/>
</dbReference>
<dbReference type="InterPro" id="IPR043129">
    <property type="entry name" value="ATPase_NBD"/>
</dbReference>
<dbReference type="InterPro" id="IPR016735">
    <property type="entry name" value="Methan_mark_12"/>
</dbReference>
<dbReference type="NCBIfam" id="TIGR03281">
    <property type="entry name" value="methan_mark_12"/>
    <property type="match status" value="1"/>
</dbReference>
<dbReference type="PIRSF" id="PIRSF018783">
    <property type="entry name" value="UCP018783"/>
    <property type="match status" value="1"/>
</dbReference>
<dbReference type="SUPFAM" id="SSF53067">
    <property type="entry name" value="Actin-like ATPase domain"/>
    <property type="match status" value="1"/>
</dbReference>
<feature type="chain" id="PRO_0000151261" description="UPF0285 protein MA_3856">
    <location>
        <begin position="1"/>
        <end position="325"/>
    </location>
</feature>
<evidence type="ECO:0000255" key="1">
    <source>
        <dbReference type="HAMAP-Rule" id="MF_01087"/>
    </source>
</evidence>
<proteinExistence type="inferred from homology"/>
<sequence>MTFIGVDHGTTAMRFALIEDEKVLTFELGRAEAAAMSEKEILAAIEREFGIRIGDIDLVALTYSMGDGFSAIKDVRKLEGRGLQSIEGAGKKTGGGTRVFDAVRNSEIPAIAIPGLHSGSRVDPRMKVFSHLTSPEKLGIAYHILCLGYEDFVVSDISSNTVTLAVVAGKVIGAIDACIFAPGVHHGPLDLQAIRNVDDRLQTANQAFIEAGTLKMTPYKDREELLKAAGKGEKPALLALDTIALFAAMEIASMQLLMKDYGTTGTVFLAGSVGEVEYVQKKICTHLDQECLSLGKWHAAIGCAEIARDVSAGKKQILGVNVDYP</sequence>
<comment type="similarity">
    <text evidence="1">Belongs to the UPF0285 family.</text>
</comment>
<accession>Q8TJD0</accession>
<gene>
    <name type="ordered locus">MA_3856</name>
</gene>
<name>Y3856_METAC</name>
<reference key="1">
    <citation type="journal article" date="2002" name="Genome Res.">
        <title>The genome of Methanosarcina acetivorans reveals extensive metabolic and physiological diversity.</title>
        <authorList>
            <person name="Galagan J.E."/>
            <person name="Nusbaum C."/>
            <person name="Roy A."/>
            <person name="Endrizzi M.G."/>
            <person name="Macdonald P."/>
            <person name="FitzHugh W."/>
            <person name="Calvo S."/>
            <person name="Engels R."/>
            <person name="Smirnov S."/>
            <person name="Atnoor D."/>
            <person name="Brown A."/>
            <person name="Allen N."/>
            <person name="Naylor J."/>
            <person name="Stange-Thomann N."/>
            <person name="DeArellano K."/>
            <person name="Johnson R."/>
            <person name="Linton L."/>
            <person name="McEwan P."/>
            <person name="McKernan K."/>
            <person name="Talamas J."/>
            <person name="Tirrell A."/>
            <person name="Ye W."/>
            <person name="Zimmer A."/>
            <person name="Barber R.D."/>
            <person name="Cann I."/>
            <person name="Graham D.E."/>
            <person name="Grahame D.A."/>
            <person name="Guss A.M."/>
            <person name="Hedderich R."/>
            <person name="Ingram-Smith C."/>
            <person name="Kuettner H.C."/>
            <person name="Krzycki J.A."/>
            <person name="Leigh J.A."/>
            <person name="Li W."/>
            <person name="Liu J."/>
            <person name="Mukhopadhyay B."/>
            <person name="Reeve J.N."/>
            <person name="Smith K."/>
            <person name="Springer T.A."/>
            <person name="Umayam L.A."/>
            <person name="White O."/>
            <person name="White R.H."/>
            <person name="de Macario E.C."/>
            <person name="Ferry J.G."/>
            <person name="Jarrell K.F."/>
            <person name="Jing H."/>
            <person name="Macario A.J.L."/>
            <person name="Paulsen I.T."/>
            <person name="Pritchett M."/>
            <person name="Sowers K.R."/>
            <person name="Swanson R.V."/>
            <person name="Zinder S.H."/>
            <person name="Lander E."/>
            <person name="Metcalf W.W."/>
            <person name="Birren B."/>
        </authorList>
    </citation>
    <scope>NUCLEOTIDE SEQUENCE [LARGE SCALE GENOMIC DNA]</scope>
    <source>
        <strain>ATCC 35395 / DSM 2834 / JCM 12185 / C2A</strain>
    </source>
</reference>
<keyword id="KW-1185">Reference proteome</keyword>